<comment type="function">
    <text evidence="1">Is the main repressor of the genes involved in the de novo synthesis of purine nucleotides, regulating purB, purC, purEK, purF, purHD, purL, purMN and guaBA expression. PurR is allosterically activated to bind its cognate DNA by binding the purine corepressors, hypoxanthine or guanine, thereby effecting transcription repression.</text>
</comment>
<comment type="pathway">
    <text>Purine metabolism; purine nucleotide biosynthesis [regulation].</text>
</comment>
<comment type="subunit">
    <text evidence="1">Homodimer.</text>
</comment>
<comment type="domain">
    <text evidence="1">Consists of two structural and functional domains: an N-terminal DNA-binding domain, approximately the first 60 residues, and a larger C-terminal domain, approximately 280 residues, which imparts the function of corepressor binding and oligomerization.</text>
</comment>
<keyword id="KW-0238">DNA-binding</keyword>
<keyword id="KW-0658">Purine biosynthesis</keyword>
<keyword id="KW-1185">Reference proteome</keyword>
<keyword id="KW-0678">Repressor</keyword>
<keyword id="KW-0804">Transcription</keyword>
<keyword id="KW-0805">Transcription regulation</keyword>
<reference key="1">
    <citation type="journal article" date="2005" name="Nucleic Acids Res.">
        <title>Genome dynamics and diversity of Shigella species, the etiologic agents of bacillary dysentery.</title>
        <authorList>
            <person name="Yang F."/>
            <person name="Yang J."/>
            <person name="Zhang X."/>
            <person name="Chen L."/>
            <person name="Jiang Y."/>
            <person name="Yan Y."/>
            <person name="Tang X."/>
            <person name="Wang J."/>
            <person name="Xiong Z."/>
            <person name="Dong J."/>
            <person name="Xue Y."/>
            <person name="Zhu Y."/>
            <person name="Xu X."/>
            <person name="Sun L."/>
            <person name="Chen S."/>
            <person name="Nie H."/>
            <person name="Peng J."/>
            <person name="Xu J."/>
            <person name="Wang Y."/>
            <person name="Yuan Z."/>
            <person name="Wen Y."/>
            <person name="Yao Z."/>
            <person name="Shen Y."/>
            <person name="Qiang B."/>
            <person name="Hou Y."/>
            <person name="Yu J."/>
            <person name="Jin Q."/>
        </authorList>
    </citation>
    <scope>NUCLEOTIDE SEQUENCE [LARGE SCALE GENOMIC DNA]</scope>
    <source>
        <strain>Sd197</strain>
    </source>
</reference>
<gene>
    <name evidence="1" type="primary">purR</name>
    <name type="ordered locus">SDY_1884</name>
</gene>
<dbReference type="EMBL" id="CP000034">
    <property type="protein sequence ID" value="ABB61992.1"/>
    <property type="molecule type" value="Genomic_DNA"/>
</dbReference>
<dbReference type="RefSeq" id="WP_000190986.1">
    <property type="nucleotide sequence ID" value="NC_007606.1"/>
</dbReference>
<dbReference type="RefSeq" id="YP_403483.1">
    <property type="nucleotide sequence ID" value="NC_007606.1"/>
</dbReference>
<dbReference type="SMR" id="Q32FB3"/>
<dbReference type="STRING" id="300267.SDY_1884"/>
<dbReference type="EnsemblBacteria" id="ABB61992">
    <property type="protein sequence ID" value="ABB61992"/>
    <property type="gene ID" value="SDY_1884"/>
</dbReference>
<dbReference type="KEGG" id="sdy:SDY_1884"/>
<dbReference type="PATRIC" id="fig|300267.13.peg.2267"/>
<dbReference type="HOGENOM" id="CLU_037628_6_2_6"/>
<dbReference type="UniPathway" id="UPA00488"/>
<dbReference type="Proteomes" id="UP000002716">
    <property type="component" value="Chromosome"/>
</dbReference>
<dbReference type="GO" id="GO:0003700">
    <property type="term" value="F:DNA-binding transcription factor activity"/>
    <property type="evidence" value="ECO:0007669"/>
    <property type="project" value="TreeGrafter"/>
</dbReference>
<dbReference type="GO" id="GO:0000976">
    <property type="term" value="F:transcription cis-regulatory region binding"/>
    <property type="evidence" value="ECO:0007669"/>
    <property type="project" value="TreeGrafter"/>
</dbReference>
<dbReference type="GO" id="GO:0045892">
    <property type="term" value="P:negative regulation of DNA-templated transcription"/>
    <property type="evidence" value="ECO:0007669"/>
    <property type="project" value="UniProtKB-UniRule"/>
</dbReference>
<dbReference type="GO" id="GO:0006164">
    <property type="term" value="P:purine nucleotide biosynthetic process"/>
    <property type="evidence" value="ECO:0007669"/>
    <property type="project" value="UniProtKB-UniPathway"/>
</dbReference>
<dbReference type="CDD" id="cd01392">
    <property type="entry name" value="HTH_LacI"/>
    <property type="match status" value="1"/>
</dbReference>
<dbReference type="CDD" id="cd06275">
    <property type="entry name" value="PBP1_PurR"/>
    <property type="match status" value="1"/>
</dbReference>
<dbReference type="FunFam" id="1.10.260.40:FF:000002">
    <property type="entry name" value="HTH-type transcriptional repressor PurR"/>
    <property type="match status" value="1"/>
</dbReference>
<dbReference type="FunFam" id="3.40.50.2300:FF:000045">
    <property type="entry name" value="HTH-type transcriptional repressor PurR"/>
    <property type="match status" value="1"/>
</dbReference>
<dbReference type="Gene3D" id="3.40.50.2300">
    <property type="match status" value="2"/>
</dbReference>
<dbReference type="Gene3D" id="1.10.260.40">
    <property type="entry name" value="lambda repressor-like DNA-binding domains"/>
    <property type="match status" value="1"/>
</dbReference>
<dbReference type="HAMAP" id="MF_01277">
    <property type="entry name" value="HTH_type_PurR"/>
    <property type="match status" value="1"/>
</dbReference>
<dbReference type="InterPro" id="IPR000843">
    <property type="entry name" value="HTH_LacI"/>
</dbReference>
<dbReference type="InterPro" id="IPR046335">
    <property type="entry name" value="LacI/GalR-like_sensor"/>
</dbReference>
<dbReference type="InterPro" id="IPR010982">
    <property type="entry name" value="Lambda_DNA-bd_dom_sf"/>
</dbReference>
<dbReference type="InterPro" id="IPR028082">
    <property type="entry name" value="Peripla_BP_I"/>
</dbReference>
<dbReference type="InterPro" id="IPR023588">
    <property type="entry name" value="Tscrpt_reg_HTH_PurR"/>
</dbReference>
<dbReference type="NCBIfam" id="NF007979">
    <property type="entry name" value="PRK10703.1"/>
    <property type="match status" value="1"/>
</dbReference>
<dbReference type="PANTHER" id="PTHR30146:SF148">
    <property type="entry name" value="HTH-TYPE TRANSCRIPTIONAL REPRESSOR PURR-RELATED"/>
    <property type="match status" value="1"/>
</dbReference>
<dbReference type="PANTHER" id="PTHR30146">
    <property type="entry name" value="LACI-RELATED TRANSCRIPTIONAL REPRESSOR"/>
    <property type="match status" value="1"/>
</dbReference>
<dbReference type="Pfam" id="PF00356">
    <property type="entry name" value="LacI"/>
    <property type="match status" value="1"/>
</dbReference>
<dbReference type="Pfam" id="PF13377">
    <property type="entry name" value="Peripla_BP_3"/>
    <property type="match status" value="1"/>
</dbReference>
<dbReference type="PRINTS" id="PR00036">
    <property type="entry name" value="HTHLACI"/>
</dbReference>
<dbReference type="SMART" id="SM00354">
    <property type="entry name" value="HTH_LACI"/>
    <property type="match status" value="1"/>
</dbReference>
<dbReference type="SUPFAM" id="SSF47413">
    <property type="entry name" value="lambda repressor-like DNA-binding domains"/>
    <property type="match status" value="1"/>
</dbReference>
<dbReference type="SUPFAM" id="SSF53822">
    <property type="entry name" value="Periplasmic binding protein-like I"/>
    <property type="match status" value="1"/>
</dbReference>
<dbReference type="PROSITE" id="PS00356">
    <property type="entry name" value="HTH_LACI_1"/>
    <property type="match status" value="1"/>
</dbReference>
<dbReference type="PROSITE" id="PS50932">
    <property type="entry name" value="HTH_LACI_2"/>
    <property type="match status" value="1"/>
</dbReference>
<sequence>MATIKDVAKRANVSTTTVSHVINKTRFVAEETRNAVWAAIKELHYSPSAVARSLKVNHTKSIGLLATSSEAAYFAEIIEAVEKNCFQKGYTLILGNAWNNLEKQRAYLSMMAQKRVDGLLVMCSEYPEPLLAMLEEYRHIPMVVMDWGEAKADFTDAVIDNAFEGGYMAGRYLIERGHREIGVIPGPLERNTGAGRLAGFMKAMEEAMIKVPKSWIVQGDFEPESGYRAMQQILSQPHRPTAVFCGGDIMAMGALCAADEMGLRVPQDVSLIGYDNVRNARYFTPALTTIHQPKDSLGETAFNMLLDRIVNKREEPQSIEVHPRLIERRSVADGPFRDYRR</sequence>
<evidence type="ECO:0000255" key="1">
    <source>
        <dbReference type="HAMAP-Rule" id="MF_01277"/>
    </source>
</evidence>
<name>PURR_SHIDS</name>
<accession>Q32FB3</accession>
<protein>
    <recommendedName>
        <fullName evidence="1">HTH-type transcriptional repressor PurR</fullName>
    </recommendedName>
    <alternativeName>
        <fullName evidence="1">Pur regulon repressor</fullName>
    </alternativeName>
    <alternativeName>
        <fullName evidence="1">Purine nucleotide synthesis repressor</fullName>
    </alternativeName>
</protein>
<feature type="chain" id="PRO_0000279669" description="HTH-type transcriptional repressor PurR">
    <location>
        <begin position="1"/>
        <end position="341"/>
    </location>
</feature>
<feature type="domain" description="HTH lacI-type" evidence="1">
    <location>
        <begin position="2"/>
        <end position="56"/>
    </location>
</feature>
<feature type="DNA-binding region" description="H-T-H motif" evidence="1">
    <location>
        <begin position="4"/>
        <end position="23"/>
    </location>
</feature>
<feature type="DNA-binding region" evidence="1">
    <location>
        <begin position="48"/>
        <end position="56"/>
    </location>
</feature>
<feature type="binding site" evidence="1">
    <location>
        <position position="73"/>
    </location>
    <ligand>
        <name>hypoxanthine</name>
        <dbReference type="ChEBI" id="CHEBI:17368"/>
    </ligand>
</feature>
<feature type="binding site" evidence="1">
    <location>
        <position position="190"/>
    </location>
    <ligand>
        <name>hypoxanthine</name>
        <dbReference type="ChEBI" id="CHEBI:17368"/>
    </ligand>
</feature>
<feature type="binding site" evidence="1">
    <location>
        <position position="192"/>
    </location>
    <ligand>
        <name>hypoxanthine</name>
        <dbReference type="ChEBI" id="CHEBI:17368"/>
    </ligand>
</feature>
<feature type="binding site" evidence="1">
    <location>
        <position position="221"/>
    </location>
    <ligand>
        <name>hypoxanthine</name>
        <dbReference type="ChEBI" id="CHEBI:17368"/>
    </ligand>
</feature>
<feature type="binding site" evidence="1">
    <location>
        <position position="275"/>
    </location>
    <ligand>
        <name>hypoxanthine</name>
        <dbReference type="ChEBI" id="CHEBI:17368"/>
    </ligand>
</feature>
<organism>
    <name type="scientific">Shigella dysenteriae serotype 1 (strain Sd197)</name>
    <dbReference type="NCBI Taxonomy" id="300267"/>
    <lineage>
        <taxon>Bacteria</taxon>
        <taxon>Pseudomonadati</taxon>
        <taxon>Pseudomonadota</taxon>
        <taxon>Gammaproteobacteria</taxon>
        <taxon>Enterobacterales</taxon>
        <taxon>Enterobacteriaceae</taxon>
        <taxon>Shigella</taxon>
    </lineage>
</organism>
<proteinExistence type="inferred from homology"/>